<comment type="function">
    <text evidence="2">Alpha-conotoxins act on postsynaptic membranes, they bind to the nicotinic acetylcholine receptors (nAChR) and thus inhibit them. This toxin blocks the fetal muscle subtype (alpha-1/beta-1/gamma/delta subunits) (IC(50)=0.51 nM) with 600-fold greater affinity than the adult subtype (IC(50)=310 nM). It blocks the elicited currents completely and it dissociates very slowly from the fetal muscle receptor. This toxin causes an apparently irreversible paralysis upon intramuscular injection into gold fish.</text>
</comment>
<comment type="subcellular location">
    <subcellularLocation>
        <location>Secreted</location>
    </subcellularLocation>
</comment>
<comment type="tissue specificity">
    <text>Expressed by the venom duct.</text>
</comment>
<comment type="domain">
    <text>The cysteine framework is IV (CC-C-C-C-C).</text>
</comment>
<comment type="mass spectrometry" mass="1848.58" method="MALDI" evidence="1"/>
<comment type="miscellaneous">
    <text evidence="4">The cysteine framework differs from the previously characterized alpha-A conotoxins. It also differs in its disulfide bonding. It is why authors (PubMed:15246771) propose the novel nomenclature Alpha-A(1-3) conotoxin OIVA.</text>
</comment>
<comment type="similarity">
    <text evidence="3">Belongs to the conotoxin A superfamily.</text>
</comment>
<proteinExistence type="evidence at protein level"/>
<feature type="peptide" id="PRO_0000044467" description="Alpha-conotoxin OIVA">
    <location>
        <begin position="1"/>
        <end position="18"/>
    </location>
</feature>
<feature type="modified residue" description="4-hydroxyproline" evidence="1">
    <location>
        <position position="5"/>
    </location>
</feature>
<feature type="modified residue" description="4-hydroxyproline" evidence="1">
    <location>
        <position position="11"/>
    </location>
</feature>
<feature type="modified residue" description="Cysteine amide" evidence="1">
    <location>
        <position position="18"/>
    </location>
</feature>
<feature type="disulfide bond" evidence="1">
    <location>
        <begin position="1"/>
        <end position="9"/>
    </location>
</feature>
<feature type="disulfide bond" evidence="1">
    <location>
        <begin position="2"/>
        <end position="14"/>
    </location>
</feature>
<feature type="disulfide bond" evidence="1">
    <location>
        <begin position="12"/>
        <end position="18"/>
    </location>
</feature>
<feature type="mutagenesis site" description="Dissociates very rapidly from the fetal muscle receptor." evidence="2">
    <original>H</original>
    <variation>P</variation>
    <location>
        <position position="10"/>
    </location>
</feature>
<accession>P69746</accession>
<sequence length="18" mass="1823">CCGVPNAACHPCVCKNTC</sequence>
<protein>
    <recommendedName>
        <fullName>Alpha-conotoxin OIVA</fullName>
        <shortName>Alpha-A-O4a</shortName>
        <shortName>Alpha-A-OIVA</shortName>
    </recommendedName>
</protein>
<organism>
    <name type="scientific">Conus obscurus</name>
    <name type="common">Obscure cone</name>
    <name type="synonym">Conus halitropus</name>
    <dbReference type="NCBI Taxonomy" id="89447"/>
    <lineage>
        <taxon>Eukaryota</taxon>
        <taxon>Metazoa</taxon>
        <taxon>Spiralia</taxon>
        <taxon>Lophotrochozoa</taxon>
        <taxon>Mollusca</taxon>
        <taxon>Gastropoda</taxon>
        <taxon>Caenogastropoda</taxon>
        <taxon>Neogastropoda</taxon>
        <taxon>Conoidea</taxon>
        <taxon>Conidae</taxon>
        <taxon>Conus</taxon>
        <taxon>Gastridium</taxon>
    </lineage>
</organism>
<dbReference type="ConoServer" id="1397">
    <property type="toxin name" value="OIVA"/>
</dbReference>
<dbReference type="GO" id="GO:0005576">
    <property type="term" value="C:extracellular region"/>
    <property type="evidence" value="ECO:0007669"/>
    <property type="project" value="UniProtKB-SubCell"/>
</dbReference>
<dbReference type="GO" id="GO:0035792">
    <property type="term" value="C:host cell postsynaptic membrane"/>
    <property type="evidence" value="ECO:0007669"/>
    <property type="project" value="UniProtKB-KW"/>
</dbReference>
<dbReference type="GO" id="GO:0030550">
    <property type="term" value="F:acetylcholine receptor inhibitor activity"/>
    <property type="evidence" value="ECO:0007669"/>
    <property type="project" value="UniProtKB-KW"/>
</dbReference>
<dbReference type="GO" id="GO:0099106">
    <property type="term" value="F:ion channel regulator activity"/>
    <property type="evidence" value="ECO:0007669"/>
    <property type="project" value="UniProtKB-KW"/>
</dbReference>
<dbReference type="GO" id="GO:0090729">
    <property type="term" value="F:toxin activity"/>
    <property type="evidence" value="ECO:0007669"/>
    <property type="project" value="UniProtKB-KW"/>
</dbReference>
<reference key="1">
    <citation type="journal article" date="2004" name="Toxicon">
        <title>AlphaA-Conotoxin OIVA defines a new alphaA-conotoxin subfamily of nicotinic acetylcholine receptor inhibitors.</title>
        <authorList>
            <person name="Teichert R.W."/>
            <person name="Rivier J."/>
            <person name="Dykert J."/>
            <person name="Cervini L."/>
            <person name="Gulyas J."/>
            <person name="Bulaj G."/>
            <person name="Ellison M."/>
            <person name="Olivera B.M."/>
        </authorList>
    </citation>
    <scope>PROTEIN SEQUENCE</scope>
    <scope>SYNTHESIS</scope>
    <scope>AMIDATION AT CYS-18</scope>
    <scope>HYDROXYLATION AT PRO-5 AND PRO-11</scope>
    <scope>DISULFIDE BONDS</scope>
    <scope>CHARACTERIZATION</scope>
    <scope>MASS SPECTROMETRY</scope>
    <source>
        <tissue>Venom</tissue>
    </source>
</reference>
<reference key="2">
    <citation type="journal article" date="2006" name="Biochemistry">
        <title>Definition and characterization of the short alphaA-conotoxins: a single residue determines dissociation kinetics from the fetal muscle nicotinic acetylcholine receptor.</title>
        <authorList>
            <person name="Teichert R.W."/>
            <person name="Lopez-Vera E."/>
            <person name="Gulyas J."/>
            <person name="Watkins M."/>
            <person name="Rivier J."/>
            <person name="Olivera B.M."/>
        </authorList>
    </citation>
    <scope>SYNTHESIS</scope>
    <scope>FUNCTION</scope>
    <scope>MUTAGENESIS OF HIS-10</scope>
</reference>
<name>CA4A_CONOB</name>
<evidence type="ECO:0000269" key="1">
    <source>
    </source>
</evidence>
<evidence type="ECO:0000269" key="2">
    <source>
    </source>
</evidence>
<evidence type="ECO:0000305" key="3"/>
<evidence type="ECO:0000305" key="4">
    <source>
    </source>
</evidence>
<keyword id="KW-0008">Acetylcholine receptor inhibiting toxin</keyword>
<keyword id="KW-0027">Amidation</keyword>
<keyword id="KW-0903">Direct protein sequencing</keyword>
<keyword id="KW-1015">Disulfide bond</keyword>
<keyword id="KW-0379">Hydroxylation</keyword>
<keyword id="KW-0872">Ion channel impairing toxin</keyword>
<keyword id="KW-0528">Neurotoxin</keyword>
<keyword id="KW-0629">Postsynaptic neurotoxin</keyword>
<keyword id="KW-0964">Secreted</keyword>
<keyword id="KW-0800">Toxin</keyword>